<evidence type="ECO:0000255" key="1">
    <source>
        <dbReference type="HAMAP-Rule" id="MF_00204"/>
    </source>
</evidence>
<dbReference type="EMBL" id="CP001048">
    <property type="protein sequence ID" value="ACC88241.1"/>
    <property type="molecule type" value="Genomic_DNA"/>
</dbReference>
<dbReference type="RefSeq" id="WP_011191959.1">
    <property type="nucleotide sequence ID" value="NZ_CP009780.1"/>
</dbReference>
<dbReference type="SMR" id="B2K8T5"/>
<dbReference type="GeneID" id="49786740"/>
<dbReference type="KEGG" id="ypb:YPTS_1266"/>
<dbReference type="PATRIC" id="fig|502801.10.peg.615"/>
<dbReference type="GO" id="GO:0005737">
    <property type="term" value="C:cytoplasm"/>
    <property type="evidence" value="ECO:0007669"/>
    <property type="project" value="UniProtKB-SubCell"/>
</dbReference>
<dbReference type="GO" id="GO:0009380">
    <property type="term" value="C:excinuclease repair complex"/>
    <property type="evidence" value="ECO:0007669"/>
    <property type="project" value="InterPro"/>
</dbReference>
<dbReference type="GO" id="GO:0005524">
    <property type="term" value="F:ATP binding"/>
    <property type="evidence" value="ECO:0007669"/>
    <property type="project" value="UniProtKB-UniRule"/>
</dbReference>
<dbReference type="GO" id="GO:0016887">
    <property type="term" value="F:ATP hydrolysis activity"/>
    <property type="evidence" value="ECO:0007669"/>
    <property type="project" value="InterPro"/>
</dbReference>
<dbReference type="GO" id="GO:0003677">
    <property type="term" value="F:DNA binding"/>
    <property type="evidence" value="ECO:0007669"/>
    <property type="project" value="UniProtKB-UniRule"/>
</dbReference>
<dbReference type="GO" id="GO:0009381">
    <property type="term" value="F:excinuclease ABC activity"/>
    <property type="evidence" value="ECO:0007669"/>
    <property type="project" value="UniProtKB-UniRule"/>
</dbReference>
<dbReference type="GO" id="GO:0004386">
    <property type="term" value="F:helicase activity"/>
    <property type="evidence" value="ECO:0007669"/>
    <property type="project" value="UniProtKB-KW"/>
</dbReference>
<dbReference type="GO" id="GO:0006289">
    <property type="term" value="P:nucleotide-excision repair"/>
    <property type="evidence" value="ECO:0007669"/>
    <property type="project" value="UniProtKB-UniRule"/>
</dbReference>
<dbReference type="GO" id="GO:0009432">
    <property type="term" value="P:SOS response"/>
    <property type="evidence" value="ECO:0007669"/>
    <property type="project" value="UniProtKB-UniRule"/>
</dbReference>
<dbReference type="CDD" id="cd17916">
    <property type="entry name" value="DEXHc_UvrB"/>
    <property type="match status" value="1"/>
</dbReference>
<dbReference type="CDD" id="cd18790">
    <property type="entry name" value="SF2_C_UvrB"/>
    <property type="match status" value="1"/>
</dbReference>
<dbReference type="FunFam" id="3.40.50.300:FF:000257">
    <property type="entry name" value="UvrABC system protein B"/>
    <property type="match status" value="1"/>
</dbReference>
<dbReference type="FunFam" id="3.40.50.300:FF:000401">
    <property type="entry name" value="UvrABC system protein B"/>
    <property type="match status" value="1"/>
</dbReference>
<dbReference type="FunFam" id="3.40.50.300:FF:000477">
    <property type="entry name" value="UvrABC system protein B"/>
    <property type="match status" value="1"/>
</dbReference>
<dbReference type="Gene3D" id="3.40.50.300">
    <property type="entry name" value="P-loop containing nucleotide triphosphate hydrolases"/>
    <property type="match status" value="3"/>
</dbReference>
<dbReference type="Gene3D" id="4.10.860.10">
    <property type="entry name" value="UVR domain"/>
    <property type="match status" value="1"/>
</dbReference>
<dbReference type="HAMAP" id="MF_00204">
    <property type="entry name" value="UvrB"/>
    <property type="match status" value="1"/>
</dbReference>
<dbReference type="InterPro" id="IPR006935">
    <property type="entry name" value="Helicase/UvrB_N"/>
</dbReference>
<dbReference type="InterPro" id="IPR014001">
    <property type="entry name" value="Helicase_ATP-bd"/>
</dbReference>
<dbReference type="InterPro" id="IPR001650">
    <property type="entry name" value="Helicase_C-like"/>
</dbReference>
<dbReference type="InterPro" id="IPR027417">
    <property type="entry name" value="P-loop_NTPase"/>
</dbReference>
<dbReference type="InterPro" id="IPR001943">
    <property type="entry name" value="UVR_dom"/>
</dbReference>
<dbReference type="InterPro" id="IPR036876">
    <property type="entry name" value="UVR_dom_sf"/>
</dbReference>
<dbReference type="InterPro" id="IPR004807">
    <property type="entry name" value="UvrB"/>
</dbReference>
<dbReference type="InterPro" id="IPR041471">
    <property type="entry name" value="UvrB_inter"/>
</dbReference>
<dbReference type="InterPro" id="IPR024759">
    <property type="entry name" value="UvrB_YAD/RRR_dom"/>
</dbReference>
<dbReference type="NCBIfam" id="NF003673">
    <property type="entry name" value="PRK05298.1"/>
    <property type="match status" value="1"/>
</dbReference>
<dbReference type="NCBIfam" id="TIGR00631">
    <property type="entry name" value="uvrb"/>
    <property type="match status" value="1"/>
</dbReference>
<dbReference type="PANTHER" id="PTHR24029">
    <property type="entry name" value="UVRABC SYSTEM PROTEIN B"/>
    <property type="match status" value="1"/>
</dbReference>
<dbReference type="PANTHER" id="PTHR24029:SF0">
    <property type="entry name" value="UVRABC SYSTEM PROTEIN B"/>
    <property type="match status" value="1"/>
</dbReference>
<dbReference type="Pfam" id="PF00271">
    <property type="entry name" value="Helicase_C"/>
    <property type="match status" value="1"/>
</dbReference>
<dbReference type="Pfam" id="PF04851">
    <property type="entry name" value="ResIII"/>
    <property type="match status" value="1"/>
</dbReference>
<dbReference type="Pfam" id="PF02151">
    <property type="entry name" value="UVR"/>
    <property type="match status" value="1"/>
</dbReference>
<dbReference type="Pfam" id="PF12344">
    <property type="entry name" value="UvrB"/>
    <property type="match status" value="1"/>
</dbReference>
<dbReference type="Pfam" id="PF17757">
    <property type="entry name" value="UvrB_inter"/>
    <property type="match status" value="1"/>
</dbReference>
<dbReference type="SMART" id="SM00487">
    <property type="entry name" value="DEXDc"/>
    <property type="match status" value="1"/>
</dbReference>
<dbReference type="SMART" id="SM00490">
    <property type="entry name" value="HELICc"/>
    <property type="match status" value="1"/>
</dbReference>
<dbReference type="SUPFAM" id="SSF46600">
    <property type="entry name" value="C-terminal UvrC-binding domain of UvrB"/>
    <property type="match status" value="1"/>
</dbReference>
<dbReference type="SUPFAM" id="SSF52540">
    <property type="entry name" value="P-loop containing nucleoside triphosphate hydrolases"/>
    <property type="match status" value="2"/>
</dbReference>
<dbReference type="PROSITE" id="PS51192">
    <property type="entry name" value="HELICASE_ATP_BIND_1"/>
    <property type="match status" value="1"/>
</dbReference>
<dbReference type="PROSITE" id="PS51194">
    <property type="entry name" value="HELICASE_CTER"/>
    <property type="match status" value="1"/>
</dbReference>
<dbReference type="PROSITE" id="PS50151">
    <property type="entry name" value="UVR"/>
    <property type="match status" value="1"/>
</dbReference>
<comment type="function">
    <text evidence="1">The UvrABC repair system catalyzes the recognition and processing of DNA lesions. A damage recognition complex composed of 2 UvrA and 2 UvrB subunits scans DNA for abnormalities. Upon binding of the UvrA(2)B(2) complex to a putative damaged site, the DNA wraps around one UvrB monomer. DNA wrap is dependent on ATP binding by UvrB and probably causes local melting of the DNA helix, facilitating insertion of UvrB beta-hairpin between the DNA strands. Then UvrB probes one DNA strand for the presence of a lesion. If a lesion is found the UvrA subunits dissociate and the UvrB-DNA preincision complex is formed. This complex is subsequently bound by UvrC and the second UvrB is released. If no lesion is found, the DNA wraps around the other UvrB subunit that will check the other stand for damage.</text>
</comment>
<comment type="subunit">
    <text evidence="1">Forms a heterotetramer with UvrA during the search for lesions. Interacts with UvrC in an incision complex.</text>
</comment>
<comment type="subcellular location">
    <subcellularLocation>
        <location evidence="1">Cytoplasm</location>
    </subcellularLocation>
</comment>
<comment type="domain">
    <text evidence="1">The beta-hairpin motif is involved in DNA binding.</text>
</comment>
<comment type="similarity">
    <text evidence="1">Belongs to the UvrB family.</text>
</comment>
<organism>
    <name type="scientific">Yersinia pseudotuberculosis serotype IB (strain PB1/+)</name>
    <dbReference type="NCBI Taxonomy" id="502801"/>
    <lineage>
        <taxon>Bacteria</taxon>
        <taxon>Pseudomonadati</taxon>
        <taxon>Pseudomonadota</taxon>
        <taxon>Gammaproteobacteria</taxon>
        <taxon>Enterobacterales</taxon>
        <taxon>Yersiniaceae</taxon>
        <taxon>Yersinia</taxon>
    </lineage>
</organism>
<protein>
    <recommendedName>
        <fullName evidence="1">UvrABC system protein B</fullName>
        <shortName evidence="1">Protein UvrB</shortName>
    </recommendedName>
    <alternativeName>
        <fullName evidence="1">Excinuclease ABC subunit B</fullName>
    </alternativeName>
</protein>
<sequence length="671" mass="76246">MSKSFKLHSVFKPAGDQPEAIRKLEEGLENGLAHQTLLGVTGSGKTFTVANVIADLNRPTMILAPNKTLAAQLYGEMKEFFPDNAVEYFVSYYDYYQPEAYVPSSDTFIEKDASVNEHIEQMRLSATKALLERRDVVVVASVSAIYGLGDPDLYLKMMLHLTRGMIIDQRSILRRLSELQYSRNDQVFQRGTFRVRGEVIDIFPAESDEWALRVELFDEEVERLSIFDPLTGQLQHEVPRFTVYPKTHYVTPRERILQAMEEIKVELAERRQVLLANNKLLEEQRLSQRTQFDLEMMNELGYCSGIENYSRYLSGRGPGEAPPTLFDYLPADGLLIVDESHVTIPQIGGMYKGDRSRKETLVEYGFRLPSALDNRPMRFEEFEALAPQTIYVSATPGKYELEKSGGDIIEQVVRPTGLLDPLIEVRPVATQVDDLLSEIRIRAAINERVLVTTLTKRMAEDLTDYLSEHGAKVRYLHSDIDTVERVEIIRDLRLGEFDVLVGINLLREGLDMPEVSLVAILDADKEGFLRSERSLIQTIGRAARNLNGKAILYGDRITASMEKAIGETERRRAKQQAYNEERGIIPQGLNKKIGDILQLGQPSMRGKGKGRGSHKMADTTQYQSLSPKALDQKIRELEAKMYTYAQNLEFEQAAELRDQVHQLRQQFIAIS</sequence>
<proteinExistence type="inferred from homology"/>
<accession>B2K8T5</accession>
<name>UVRB_YERPB</name>
<keyword id="KW-0067">ATP-binding</keyword>
<keyword id="KW-0963">Cytoplasm</keyword>
<keyword id="KW-0227">DNA damage</keyword>
<keyword id="KW-0228">DNA excision</keyword>
<keyword id="KW-0234">DNA repair</keyword>
<keyword id="KW-0267">Excision nuclease</keyword>
<keyword id="KW-0347">Helicase</keyword>
<keyword id="KW-0378">Hydrolase</keyword>
<keyword id="KW-0547">Nucleotide-binding</keyword>
<keyword id="KW-0742">SOS response</keyword>
<reference key="1">
    <citation type="submission" date="2008-04" db="EMBL/GenBank/DDBJ databases">
        <title>Complete sequence of Yersinia pseudotuberculosis PB1/+.</title>
        <authorList>
            <person name="Copeland A."/>
            <person name="Lucas S."/>
            <person name="Lapidus A."/>
            <person name="Glavina del Rio T."/>
            <person name="Dalin E."/>
            <person name="Tice H."/>
            <person name="Bruce D."/>
            <person name="Goodwin L."/>
            <person name="Pitluck S."/>
            <person name="Munk A.C."/>
            <person name="Brettin T."/>
            <person name="Detter J.C."/>
            <person name="Han C."/>
            <person name="Tapia R."/>
            <person name="Schmutz J."/>
            <person name="Larimer F."/>
            <person name="Land M."/>
            <person name="Hauser L."/>
            <person name="Challacombe J.F."/>
            <person name="Green L."/>
            <person name="Lindler L.E."/>
            <person name="Nikolich M.P."/>
            <person name="Richardson P."/>
        </authorList>
    </citation>
    <scope>NUCLEOTIDE SEQUENCE [LARGE SCALE GENOMIC DNA]</scope>
    <source>
        <strain>PB1/+</strain>
    </source>
</reference>
<gene>
    <name evidence="1" type="primary">uvrB</name>
    <name type="ordered locus">YPTS_1266</name>
</gene>
<feature type="chain" id="PRO_1000099581" description="UvrABC system protein B">
    <location>
        <begin position="1"/>
        <end position="671"/>
    </location>
</feature>
<feature type="domain" description="Helicase ATP-binding" evidence="1">
    <location>
        <begin position="26"/>
        <end position="183"/>
    </location>
</feature>
<feature type="domain" description="Helicase C-terminal" evidence="1">
    <location>
        <begin position="431"/>
        <end position="597"/>
    </location>
</feature>
<feature type="domain" description="UVR" evidence="1">
    <location>
        <begin position="631"/>
        <end position="666"/>
    </location>
</feature>
<feature type="short sequence motif" description="Beta-hairpin">
    <location>
        <begin position="92"/>
        <end position="115"/>
    </location>
</feature>
<feature type="binding site" evidence="1">
    <location>
        <begin position="39"/>
        <end position="46"/>
    </location>
    <ligand>
        <name>ATP</name>
        <dbReference type="ChEBI" id="CHEBI:30616"/>
    </ligand>
</feature>